<protein>
    <recommendedName>
        <fullName evidence="1">Small ribosomal subunit protein uS4</fullName>
    </recommendedName>
    <alternativeName>
        <fullName evidence="3">30S ribosomal protein S4</fullName>
    </alternativeName>
</protein>
<gene>
    <name evidence="1" type="primary">rpsD</name>
    <name type="ordered locus">CC_2511</name>
</gene>
<keyword id="KW-1185">Reference proteome</keyword>
<keyword id="KW-0687">Ribonucleoprotein</keyword>
<keyword id="KW-0689">Ribosomal protein</keyword>
<keyword id="KW-0694">RNA-binding</keyword>
<keyword id="KW-0699">rRNA-binding</keyword>
<dbReference type="EMBL" id="AE005673">
    <property type="protein sequence ID" value="AAK24482.1"/>
    <property type="molecule type" value="Genomic_DNA"/>
</dbReference>
<dbReference type="PIR" id="F87560">
    <property type="entry name" value="F87560"/>
</dbReference>
<dbReference type="RefSeq" id="NP_421314.1">
    <property type="nucleotide sequence ID" value="NC_002696.2"/>
</dbReference>
<dbReference type="RefSeq" id="WP_010920368.1">
    <property type="nucleotide sequence ID" value="NC_002696.2"/>
</dbReference>
<dbReference type="SMR" id="Q9A5D9"/>
<dbReference type="STRING" id="190650.CC_2511"/>
<dbReference type="EnsemblBacteria" id="AAK24482">
    <property type="protein sequence ID" value="AAK24482"/>
    <property type="gene ID" value="CC_2511"/>
</dbReference>
<dbReference type="KEGG" id="ccr:CC_2511"/>
<dbReference type="PATRIC" id="fig|190650.5.peg.2528"/>
<dbReference type="eggNOG" id="COG0522">
    <property type="taxonomic scope" value="Bacteria"/>
</dbReference>
<dbReference type="HOGENOM" id="CLU_092403_0_0_5"/>
<dbReference type="BioCyc" id="CAULO:CC2511-MONOMER"/>
<dbReference type="Proteomes" id="UP000001816">
    <property type="component" value="Chromosome"/>
</dbReference>
<dbReference type="GO" id="GO:0015935">
    <property type="term" value="C:small ribosomal subunit"/>
    <property type="evidence" value="ECO:0007669"/>
    <property type="project" value="InterPro"/>
</dbReference>
<dbReference type="GO" id="GO:0019843">
    <property type="term" value="F:rRNA binding"/>
    <property type="evidence" value="ECO:0007669"/>
    <property type="project" value="UniProtKB-UniRule"/>
</dbReference>
<dbReference type="GO" id="GO:0003735">
    <property type="term" value="F:structural constituent of ribosome"/>
    <property type="evidence" value="ECO:0007669"/>
    <property type="project" value="InterPro"/>
</dbReference>
<dbReference type="GO" id="GO:0042274">
    <property type="term" value="P:ribosomal small subunit biogenesis"/>
    <property type="evidence" value="ECO:0007669"/>
    <property type="project" value="TreeGrafter"/>
</dbReference>
<dbReference type="GO" id="GO:0006412">
    <property type="term" value="P:translation"/>
    <property type="evidence" value="ECO:0007669"/>
    <property type="project" value="UniProtKB-UniRule"/>
</dbReference>
<dbReference type="CDD" id="cd00165">
    <property type="entry name" value="S4"/>
    <property type="match status" value="1"/>
</dbReference>
<dbReference type="FunFam" id="3.10.290.10:FF:000001">
    <property type="entry name" value="30S ribosomal protein S4"/>
    <property type="match status" value="1"/>
</dbReference>
<dbReference type="Gene3D" id="1.10.1050.10">
    <property type="entry name" value="Ribosomal Protein S4 Delta 41, Chain A, domain 1"/>
    <property type="match status" value="1"/>
</dbReference>
<dbReference type="Gene3D" id="3.10.290.10">
    <property type="entry name" value="RNA-binding S4 domain"/>
    <property type="match status" value="1"/>
</dbReference>
<dbReference type="HAMAP" id="MF_01306_B">
    <property type="entry name" value="Ribosomal_uS4_B"/>
    <property type="match status" value="1"/>
</dbReference>
<dbReference type="InterPro" id="IPR022801">
    <property type="entry name" value="Ribosomal_uS4"/>
</dbReference>
<dbReference type="InterPro" id="IPR005709">
    <property type="entry name" value="Ribosomal_uS4_bac-type"/>
</dbReference>
<dbReference type="InterPro" id="IPR018079">
    <property type="entry name" value="Ribosomal_uS4_CS"/>
</dbReference>
<dbReference type="InterPro" id="IPR001912">
    <property type="entry name" value="Ribosomal_uS4_N"/>
</dbReference>
<dbReference type="InterPro" id="IPR002942">
    <property type="entry name" value="S4_RNA-bd"/>
</dbReference>
<dbReference type="InterPro" id="IPR036986">
    <property type="entry name" value="S4_RNA-bd_sf"/>
</dbReference>
<dbReference type="NCBIfam" id="NF003717">
    <property type="entry name" value="PRK05327.1"/>
    <property type="match status" value="1"/>
</dbReference>
<dbReference type="NCBIfam" id="TIGR01017">
    <property type="entry name" value="rpsD_bact"/>
    <property type="match status" value="1"/>
</dbReference>
<dbReference type="PANTHER" id="PTHR11831">
    <property type="entry name" value="30S 40S RIBOSOMAL PROTEIN"/>
    <property type="match status" value="1"/>
</dbReference>
<dbReference type="PANTHER" id="PTHR11831:SF4">
    <property type="entry name" value="SMALL RIBOSOMAL SUBUNIT PROTEIN US4M"/>
    <property type="match status" value="1"/>
</dbReference>
<dbReference type="Pfam" id="PF00163">
    <property type="entry name" value="Ribosomal_S4"/>
    <property type="match status" value="1"/>
</dbReference>
<dbReference type="Pfam" id="PF01479">
    <property type="entry name" value="S4"/>
    <property type="match status" value="1"/>
</dbReference>
<dbReference type="SMART" id="SM01390">
    <property type="entry name" value="Ribosomal_S4"/>
    <property type="match status" value="1"/>
</dbReference>
<dbReference type="SMART" id="SM00363">
    <property type="entry name" value="S4"/>
    <property type="match status" value="1"/>
</dbReference>
<dbReference type="SUPFAM" id="SSF55174">
    <property type="entry name" value="Alpha-L RNA-binding motif"/>
    <property type="match status" value="1"/>
</dbReference>
<dbReference type="PROSITE" id="PS00632">
    <property type="entry name" value="RIBOSOMAL_S4"/>
    <property type="match status" value="1"/>
</dbReference>
<dbReference type="PROSITE" id="PS50889">
    <property type="entry name" value="S4"/>
    <property type="match status" value="1"/>
</dbReference>
<accession>Q9A5D9</accession>
<proteinExistence type="inferred from homology"/>
<evidence type="ECO:0000255" key="1">
    <source>
        <dbReference type="HAMAP-Rule" id="MF_01306"/>
    </source>
</evidence>
<evidence type="ECO:0000256" key="2">
    <source>
        <dbReference type="SAM" id="MobiDB-lite"/>
    </source>
</evidence>
<evidence type="ECO:0000305" key="3"/>
<sequence length="205" mass="23288">MSKRHSAKYKIDRRMGENLWGRPKSPVNSRSYGPGQHGQRRKSKVSDFGLQLRAKQKLKGYYGNLTEKQFSRTYEEAARRKGNTSENLIALLESRLDAIVYRAKFVPTVFAARQFVNHGHVTVNGKRVNIPSYRCKAGDVIQVREKSRNMALVLEAVASNERDFAEYVSVDAKSLSATFVRAPELSEVPYPVKMEPNLVVEFYAS</sequence>
<organism>
    <name type="scientific">Caulobacter vibrioides (strain ATCC 19089 / CIP 103742 / CB 15)</name>
    <name type="common">Caulobacter crescentus</name>
    <dbReference type="NCBI Taxonomy" id="190650"/>
    <lineage>
        <taxon>Bacteria</taxon>
        <taxon>Pseudomonadati</taxon>
        <taxon>Pseudomonadota</taxon>
        <taxon>Alphaproteobacteria</taxon>
        <taxon>Caulobacterales</taxon>
        <taxon>Caulobacteraceae</taxon>
        <taxon>Caulobacter</taxon>
    </lineage>
</organism>
<feature type="chain" id="PRO_0000132360" description="Small ribosomal subunit protein uS4">
    <location>
        <begin position="1"/>
        <end position="205"/>
    </location>
</feature>
<feature type="domain" description="S4 RNA-binding" evidence="1">
    <location>
        <begin position="94"/>
        <end position="154"/>
    </location>
</feature>
<feature type="region of interest" description="Disordered" evidence="2">
    <location>
        <begin position="1"/>
        <end position="46"/>
    </location>
</feature>
<reference key="1">
    <citation type="journal article" date="2001" name="Proc. Natl. Acad. Sci. U.S.A.">
        <title>Complete genome sequence of Caulobacter crescentus.</title>
        <authorList>
            <person name="Nierman W.C."/>
            <person name="Feldblyum T.V."/>
            <person name="Laub M.T."/>
            <person name="Paulsen I.T."/>
            <person name="Nelson K.E."/>
            <person name="Eisen J.A."/>
            <person name="Heidelberg J.F."/>
            <person name="Alley M.R.K."/>
            <person name="Ohta N."/>
            <person name="Maddock J.R."/>
            <person name="Potocka I."/>
            <person name="Nelson W.C."/>
            <person name="Newton A."/>
            <person name="Stephens C."/>
            <person name="Phadke N.D."/>
            <person name="Ely B."/>
            <person name="DeBoy R.T."/>
            <person name="Dodson R.J."/>
            <person name="Durkin A.S."/>
            <person name="Gwinn M.L."/>
            <person name="Haft D.H."/>
            <person name="Kolonay J.F."/>
            <person name="Smit J."/>
            <person name="Craven M.B."/>
            <person name="Khouri H.M."/>
            <person name="Shetty J."/>
            <person name="Berry K.J."/>
            <person name="Utterback T.R."/>
            <person name="Tran K."/>
            <person name="Wolf A.M."/>
            <person name="Vamathevan J.J."/>
            <person name="Ermolaeva M.D."/>
            <person name="White O."/>
            <person name="Salzberg S.L."/>
            <person name="Venter J.C."/>
            <person name="Shapiro L."/>
            <person name="Fraser C.M."/>
        </authorList>
    </citation>
    <scope>NUCLEOTIDE SEQUENCE [LARGE SCALE GENOMIC DNA]</scope>
    <source>
        <strain>ATCC 19089 / CIP 103742 / CB 15</strain>
    </source>
</reference>
<comment type="function">
    <text evidence="1">One of the primary rRNA binding proteins, it binds directly to 16S rRNA where it nucleates assembly of the body of the 30S subunit.</text>
</comment>
<comment type="function">
    <text evidence="1">With S5 and S12 plays an important role in translational accuracy.</text>
</comment>
<comment type="subunit">
    <text evidence="1">Part of the 30S ribosomal subunit. Contacts protein S5. The interaction surface between S4 and S5 is involved in control of translational fidelity.</text>
</comment>
<comment type="similarity">
    <text evidence="1">Belongs to the universal ribosomal protein uS4 family.</text>
</comment>
<name>RS4_CAUVC</name>